<gene>
    <name type="primary">mnhE2</name>
    <name type="synonym">mrpE2</name>
    <name type="ordered locus">SAB0577</name>
</gene>
<reference key="1">
    <citation type="journal article" date="2007" name="PLoS ONE">
        <title>Molecular correlates of host specialization in Staphylococcus aureus.</title>
        <authorList>
            <person name="Herron-Olson L."/>
            <person name="Fitzgerald J.R."/>
            <person name="Musser J.M."/>
            <person name="Kapur V."/>
        </authorList>
    </citation>
    <scope>NUCLEOTIDE SEQUENCE [LARGE SCALE GENOMIC DNA]</scope>
    <source>
        <strain>bovine RF122 / ET3-1</strain>
    </source>
</reference>
<sequence>MNQIVLNIIIAFLWVLFQDEDHFKFSTFFSGYLIGLIVIYILHRFFSDDFYVRKIWVAIKFLGVYLYQLITSSISTINYILFKTKDMNPGLLSYETRLTSDWAITFLTILIIITPGSTVIRISQDSKKFFIHSIDVSEKEKDSLLRSIKHYEDLILEVSR</sequence>
<comment type="subunit">
    <text evidence="1">May form a heterooligomeric complex that consists of seven subunits: mnhA2, mnhB2, mnhC2, mnhD2, mnhE2, mnhF2 and mnhG2.</text>
</comment>
<comment type="subcellular location">
    <subcellularLocation>
        <location evidence="3">Cell membrane</location>
        <topology evidence="3">Multi-pass membrane protein</topology>
    </subcellularLocation>
</comment>
<comment type="similarity">
    <text evidence="3">Belongs to the CPA3 antiporters (TC 2.A.63) subunit E family.</text>
</comment>
<evidence type="ECO:0000250" key="1"/>
<evidence type="ECO:0000255" key="2"/>
<evidence type="ECO:0000305" key="3"/>
<feature type="chain" id="PRO_0000372210" description="Putative antiporter subunit mnhE2">
    <location>
        <begin position="1"/>
        <end position="160"/>
    </location>
</feature>
<feature type="transmembrane region" description="Helical" evidence="2">
    <location>
        <begin position="22"/>
        <end position="42"/>
    </location>
</feature>
<feature type="transmembrane region" description="Helical" evidence="2">
    <location>
        <begin position="55"/>
        <end position="75"/>
    </location>
</feature>
<feature type="transmembrane region" description="Helical" evidence="2">
    <location>
        <begin position="100"/>
        <end position="120"/>
    </location>
</feature>
<proteinExistence type="inferred from homology"/>
<organism>
    <name type="scientific">Staphylococcus aureus (strain bovine RF122 / ET3-1)</name>
    <dbReference type="NCBI Taxonomy" id="273036"/>
    <lineage>
        <taxon>Bacteria</taxon>
        <taxon>Bacillati</taxon>
        <taxon>Bacillota</taxon>
        <taxon>Bacilli</taxon>
        <taxon>Bacillales</taxon>
        <taxon>Staphylococcaceae</taxon>
        <taxon>Staphylococcus</taxon>
    </lineage>
</organism>
<accession>Q2YSV3</accession>
<protein>
    <recommendedName>
        <fullName>Putative antiporter subunit mnhE2</fullName>
    </recommendedName>
    <alternativeName>
        <fullName>Mrp complex subunit E2</fullName>
    </alternativeName>
    <alternativeName>
        <fullName>Putative NADH-ubiquinone oxidoreductase subunit mnhE2</fullName>
    </alternativeName>
</protein>
<dbReference type="EMBL" id="AJ938182">
    <property type="protein sequence ID" value="CAI80265.1"/>
    <property type="molecule type" value="Genomic_DNA"/>
</dbReference>
<dbReference type="RefSeq" id="WP_001071971.1">
    <property type="nucleotide sequence ID" value="NC_007622.1"/>
</dbReference>
<dbReference type="SMR" id="Q2YSV3"/>
<dbReference type="KEGG" id="sab:SAB0577"/>
<dbReference type="HOGENOM" id="CLU_086615_3_2_9"/>
<dbReference type="GO" id="GO:0005886">
    <property type="term" value="C:plasma membrane"/>
    <property type="evidence" value="ECO:0007669"/>
    <property type="project" value="UniProtKB-SubCell"/>
</dbReference>
<dbReference type="GO" id="GO:0015297">
    <property type="term" value="F:antiporter activity"/>
    <property type="evidence" value="ECO:0007669"/>
    <property type="project" value="UniProtKB-KW"/>
</dbReference>
<dbReference type="GO" id="GO:0008324">
    <property type="term" value="F:monoatomic cation transmembrane transporter activity"/>
    <property type="evidence" value="ECO:0007669"/>
    <property type="project" value="InterPro"/>
</dbReference>
<dbReference type="InterPro" id="IPR002758">
    <property type="entry name" value="Cation_antiport_E"/>
</dbReference>
<dbReference type="NCBIfam" id="NF006517">
    <property type="entry name" value="PRK08965.1-1"/>
    <property type="match status" value="1"/>
</dbReference>
<dbReference type="PANTHER" id="PTHR34584">
    <property type="entry name" value="NA(+)/H(+) ANTIPORTER SUBUNIT E1"/>
    <property type="match status" value="1"/>
</dbReference>
<dbReference type="PANTHER" id="PTHR34584:SF1">
    <property type="entry name" value="NA(+)_H(+) ANTIPORTER SUBUNIT E1"/>
    <property type="match status" value="1"/>
</dbReference>
<dbReference type="Pfam" id="PF01899">
    <property type="entry name" value="MNHE"/>
    <property type="match status" value="1"/>
</dbReference>
<dbReference type="PIRSF" id="PIRSF019239">
    <property type="entry name" value="MrpE"/>
    <property type="match status" value="1"/>
</dbReference>
<keyword id="KW-0050">Antiport</keyword>
<keyword id="KW-1003">Cell membrane</keyword>
<keyword id="KW-0406">Ion transport</keyword>
<keyword id="KW-0472">Membrane</keyword>
<keyword id="KW-0812">Transmembrane</keyword>
<keyword id="KW-1133">Transmembrane helix</keyword>
<keyword id="KW-0813">Transport</keyword>
<name>MNHE2_STAAB</name>